<evidence type="ECO:0000255" key="1">
    <source>
        <dbReference type="PROSITE-ProRule" id="PRU00837"/>
    </source>
</evidence>
<evidence type="ECO:0000256" key="2">
    <source>
        <dbReference type="SAM" id="MobiDB-lite"/>
    </source>
</evidence>
<feature type="chain" id="PRO_0000195980" description="Histone H1B, sperm">
    <location>
        <begin position="1"/>
        <end position="119"/>
    </location>
</feature>
<feature type="domain" description="H15" evidence="1">
    <location>
        <begin position="8"/>
        <end position="77"/>
    </location>
</feature>
<feature type="region of interest" description="Disordered" evidence="2">
    <location>
        <begin position="76"/>
        <end position="119"/>
    </location>
</feature>
<feature type="compositionally biased region" description="Basic residues" evidence="2">
    <location>
        <begin position="80"/>
        <end position="119"/>
    </location>
</feature>
<sequence>ARRKRAATHPPVATAVVAAILGLKDRKGSSMVAIKKYLAANYNVDVARLGPFIRRFVRKAVAEGMLVQNKGSFRVNKTALPKKKKAAKKPKAKKVKKPKSAAKKKTNRARAPKTKKNRN</sequence>
<protein>
    <recommendedName>
        <fullName>Histone H1B, sperm</fullName>
    </recommendedName>
</protein>
<accession>P06895</accession>
<organism>
    <name type="scientific">Platynereis dumerilii</name>
    <name type="common">Dumeril's clam worm</name>
    <dbReference type="NCBI Taxonomy" id="6359"/>
    <lineage>
        <taxon>Eukaryota</taxon>
        <taxon>Metazoa</taxon>
        <taxon>Spiralia</taxon>
        <taxon>Lophotrochozoa</taxon>
        <taxon>Annelida</taxon>
        <taxon>Polychaeta</taxon>
        <taxon>Errantia</taxon>
        <taxon>Phyllodocida</taxon>
        <taxon>Nereididae</taxon>
        <taxon>Platynereis</taxon>
    </lineage>
</organism>
<proteinExistence type="evidence at protein level"/>
<dbReference type="PIR" id="B24560">
    <property type="entry name" value="HSDU1B"/>
</dbReference>
<dbReference type="SMR" id="P06895"/>
<dbReference type="GO" id="GO:0000786">
    <property type="term" value="C:nucleosome"/>
    <property type="evidence" value="ECO:0007669"/>
    <property type="project" value="InterPro"/>
</dbReference>
<dbReference type="GO" id="GO:0005634">
    <property type="term" value="C:nucleus"/>
    <property type="evidence" value="ECO:0007669"/>
    <property type="project" value="UniProtKB-SubCell"/>
</dbReference>
<dbReference type="GO" id="GO:0003690">
    <property type="term" value="F:double-stranded DNA binding"/>
    <property type="evidence" value="ECO:0007669"/>
    <property type="project" value="TreeGrafter"/>
</dbReference>
<dbReference type="GO" id="GO:0031492">
    <property type="term" value="F:nucleosomal DNA binding"/>
    <property type="evidence" value="ECO:0007669"/>
    <property type="project" value="TreeGrafter"/>
</dbReference>
<dbReference type="GO" id="GO:0030261">
    <property type="term" value="P:chromosome condensation"/>
    <property type="evidence" value="ECO:0007669"/>
    <property type="project" value="TreeGrafter"/>
</dbReference>
<dbReference type="GO" id="GO:0045910">
    <property type="term" value="P:negative regulation of DNA recombination"/>
    <property type="evidence" value="ECO:0007669"/>
    <property type="project" value="TreeGrafter"/>
</dbReference>
<dbReference type="GO" id="GO:0006334">
    <property type="term" value="P:nucleosome assembly"/>
    <property type="evidence" value="ECO:0007669"/>
    <property type="project" value="InterPro"/>
</dbReference>
<dbReference type="CDD" id="cd00073">
    <property type="entry name" value="H15"/>
    <property type="match status" value="1"/>
</dbReference>
<dbReference type="Gene3D" id="1.10.10.10">
    <property type="entry name" value="Winged helix-like DNA-binding domain superfamily/Winged helix DNA-binding domain"/>
    <property type="match status" value="1"/>
</dbReference>
<dbReference type="InterPro" id="IPR005818">
    <property type="entry name" value="Histone_H1/H5_H15"/>
</dbReference>
<dbReference type="InterPro" id="IPR036388">
    <property type="entry name" value="WH-like_DNA-bd_sf"/>
</dbReference>
<dbReference type="InterPro" id="IPR036390">
    <property type="entry name" value="WH_DNA-bd_sf"/>
</dbReference>
<dbReference type="PANTHER" id="PTHR11467:SF20">
    <property type="entry name" value="H15 DOMAIN-CONTAINING PROTEIN-RELATED"/>
    <property type="match status" value="1"/>
</dbReference>
<dbReference type="PANTHER" id="PTHR11467">
    <property type="entry name" value="HISTONE H1"/>
    <property type="match status" value="1"/>
</dbReference>
<dbReference type="Pfam" id="PF00538">
    <property type="entry name" value="Linker_histone"/>
    <property type="match status" value="1"/>
</dbReference>
<dbReference type="SMART" id="SM00526">
    <property type="entry name" value="H15"/>
    <property type="match status" value="1"/>
</dbReference>
<dbReference type="SUPFAM" id="SSF46785">
    <property type="entry name" value="Winged helix' DNA-binding domain"/>
    <property type="match status" value="1"/>
</dbReference>
<dbReference type="PROSITE" id="PS51504">
    <property type="entry name" value="H15"/>
    <property type="match status" value="1"/>
</dbReference>
<reference key="1">
    <citation type="journal article" date="1985" name="Eur. J. Biochem.">
        <title>Primary structure of the two variants of a sperm-specific histone H1 from the annelid Platynereis dumerilii.</title>
        <authorList>
            <person name="Kmiecik D."/>
            <person name="Sellos D."/>
            <person name="Belaiche D."/>
            <person name="Sautiere P."/>
        </authorList>
    </citation>
    <scope>PROTEIN SEQUENCE</scope>
</reference>
<keyword id="KW-0158">Chromosome</keyword>
<keyword id="KW-0903">Direct protein sequencing</keyword>
<keyword id="KW-0238">DNA-binding</keyword>
<keyword id="KW-0539">Nucleus</keyword>
<comment type="function">
    <text>Histones H1 are necessary for the condensation of nucleosome chains into higher-order structures.</text>
</comment>
<comment type="subcellular location">
    <subcellularLocation>
        <location>Nucleus</location>
    </subcellularLocation>
    <subcellularLocation>
        <location>Chromosome</location>
    </subcellularLocation>
</comment>
<comment type="similarity">
    <text evidence="1">Belongs to the histone H1/H5 family.</text>
</comment>
<name>H1B_PLADU</name>